<name>URE2_CLOPF</name>
<keyword id="KW-0963">Cytoplasm</keyword>
<keyword id="KW-0378">Hydrolase</keyword>
<keyword id="KW-0614">Plasmid</keyword>
<organism>
    <name type="scientific">Clostridium perfringens</name>
    <dbReference type="NCBI Taxonomy" id="1502"/>
    <lineage>
        <taxon>Bacteria</taxon>
        <taxon>Bacillati</taxon>
        <taxon>Bacillota</taxon>
        <taxon>Clostridia</taxon>
        <taxon>Eubacteriales</taxon>
        <taxon>Clostridiaceae</taxon>
        <taxon>Clostridium</taxon>
    </lineage>
</organism>
<gene>
    <name evidence="1" type="primary">ureB</name>
</gene>
<dbReference type="EC" id="3.5.1.5" evidence="1"/>
<dbReference type="EMBL" id="Y10356">
    <property type="protein sequence ID" value="CAA71384.1"/>
    <property type="molecule type" value="Genomic_DNA"/>
</dbReference>
<dbReference type="RefSeq" id="WP_042266543.1">
    <property type="nucleotide sequence ID" value="NZ_JAVVAF010000034.1"/>
</dbReference>
<dbReference type="SMR" id="P94668"/>
<dbReference type="UniPathway" id="UPA00258">
    <property type="reaction ID" value="UER00370"/>
</dbReference>
<dbReference type="GO" id="GO:0035550">
    <property type="term" value="C:urease complex"/>
    <property type="evidence" value="ECO:0007669"/>
    <property type="project" value="InterPro"/>
</dbReference>
<dbReference type="GO" id="GO:0009039">
    <property type="term" value="F:urease activity"/>
    <property type="evidence" value="ECO:0007669"/>
    <property type="project" value="UniProtKB-UniRule"/>
</dbReference>
<dbReference type="GO" id="GO:0043419">
    <property type="term" value="P:urea catabolic process"/>
    <property type="evidence" value="ECO:0007669"/>
    <property type="project" value="UniProtKB-UniRule"/>
</dbReference>
<dbReference type="CDD" id="cd00407">
    <property type="entry name" value="Urease_beta"/>
    <property type="match status" value="1"/>
</dbReference>
<dbReference type="FunFam" id="2.10.150.10:FF:000001">
    <property type="entry name" value="Urease subunit beta"/>
    <property type="match status" value="1"/>
</dbReference>
<dbReference type="Gene3D" id="2.10.150.10">
    <property type="entry name" value="Urease, beta subunit"/>
    <property type="match status" value="1"/>
</dbReference>
<dbReference type="HAMAP" id="MF_01954">
    <property type="entry name" value="Urease_beta"/>
    <property type="match status" value="1"/>
</dbReference>
<dbReference type="InterPro" id="IPR002019">
    <property type="entry name" value="Urease_beta-like"/>
</dbReference>
<dbReference type="InterPro" id="IPR036461">
    <property type="entry name" value="Urease_betasu_sf"/>
</dbReference>
<dbReference type="InterPro" id="IPR050069">
    <property type="entry name" value="Urease_subunit"/>
</dbReference>
<dbReference type="NCBIfam" id="NF009682">
    <property type="entry name" value="PRK13203.1"/>
    <property type="match status" value="1"/>
</dbReference>
<dbReference type="NCBIfam" id="TIGR00192">
    <property type="entry name" value="urease_beta"/>
    <property type="match status" value="1"/>
</dbReference>
<dbReference type="PANTHER" id="PTHR33569">
    <property type="entry name" value="UREASE"/>
    <property type="match status" value="1"/>
</dbReference>
<dbReference type="PANTHER" id="PTHR33569:SF1">
    <property type="entry name" value="UREASE"/>
    <property type="match status" value="1"/>
</dbReference>
<dbReference type="Pfam" id="PF00699">
    <property type="entry name" value="Urease_beta"/>
    <property type="match status" value="1"/>
</dbReference>
<dbReference type="SUPFAM" id="SSF51278">
    <property type="entry name" value="Urease, beta-subunit"/>
    <property type="match status" value="1"/>
</dbReference>
<comment type="catalytic activity">
    <reaction evidence="1">
        <text>urea + 2 H2O + H(+) = hydrogencarbonate + 2 NH4(+)</text>
        <dbReference type="Rhea" id="RHEA:20557"/>
        <dbReference type="ChEBI" id="CHEBI:15377"/>
        <dbReference type="ChEBI" id="CHEBI:15378"/>
        <dbReference type="ChEBI" id="CHEBI:16199"/>
        <dbReference type="ChEBI" id="CHEBI:17544"/>
        <dbReference type="ChEBI" id="CHEBI:28938"/>
        <dbReference type="EC" id="3.5.1.5"/>
    </reaction>
</comment>
<comment type="pathway">
    <text evidence="1">Nitrogen metabolism; urea degradation; CO(2) and NH(3) from urea (urease route): step 1/1.</text>
</comment>
<comment type="subunit">
    <text evidence="1">Heterotrimer of UreA (gamma), UreB (beta) and UreC (alpha) subunits. Three heterotrimers associate to form the active enzyme.</text>
</comment>
<comment type="subcellular location">
    <subcellularLocation>
        <location evidence="1">Cytoplasm</location>
    </subcellularLocation>
</comment>
<comment type="similarity">
    <text evidence="1">Belongs to the urease beta subunit family.</text>
</comment>
<sequence>MIPGEFKFGQGKILCNADKKAITIEVKNTGDRAVQVGSHYHFYEVNSALDFDRKLAWGKKLDIPSGAGVRFEPGDVKKVNLVDFTGERRIFGFHDEVNGYLD</sequence>
<geneLocation type="plasmid"/>
<evidence type="ECO:0000255" key="1">
    <source>
        <dbReference type="HAMAP-Rule" id="MF_01954"/>
    </source>
</evidence>
<proteinExistence type="inferred from homology"/>
<feature type="chain" id="PRO_0000067574" description="Urease subunit beta">
    <location>
        <begin position="1"/>
        <end position="102"/>
    </location>
</feature>
<reference key="1">
    <citation type="journal article" date="1997" name="Infect. Immun.">
        <title>Clostridium perfringens urease genes are plasmid borne.</title>
        <authorList>
            <person name="Dupuy B."/>
            <person name="Daube G."/>
            <person name="Popoff M.R."/>
            <person name="Cole S.T."/>
        </authorList>
    </citation>
    <scope>NUCLEOTIDE SEQUENCE [GENOMIC DNA]</scope>
    <source>
        <strain>CP76</strain>
    </source>
</reference>
<protein>
    <recommendedName>
        <fullName evidence="1">Urease subunit beta</fullName>
        <ecNumber evidence="1">3.5.1.5</ecNumber>
    </recommendedName>
    <alternativeName>
        <fullName evidence="1">Urea amidohydrolase subunit beta</fullName>
    </alternativeName>
</protein>
<accession>P94668</accession>